<feature type="chain" id="PRO_1000190344" description="RNA-binding protein Hfq">
    <location>
        <begin position="1"/>
        <end position="82"/>
    </location>
</feature>
<feature type="domain" description="Sm" evidence="2">
    <location>
        <begin position="9"/>
        <end position="68"/>
    </location>
</feature>
<name>HFQ_PSEA8</name>
<protein>
    <recommendedName>
        <fullName evidence="1">RNA-binding protein Hfq</fullName>
    </recommendedName>
</protein>
<gene>
    <name evidence="1" type="primary">hfq</name>
    <name type="ordered locus">PLES_53301</name>
</gene>
<evidence type="ECO:0000255" key="1">
    <source>
        <dbReference type="HAMAP-Rule" id="MF_00436"/>
    </source>
</evidence>
<evidence type="ECO:0000255" key="2">
    <source>
        <dbReference type="PROSITE-ProRule" id="PRU01346"/>
    </source>
</evidence>
<accession>B7V207</accession>
<organism>
    <name type="scientific">Pseudomonas aeruginosa (strain LESB58)</name>
    <dbReference type="NCBI Taxonomy" id="557722"/>
    <lineage>
        <taxon>Bacteria</taxon>
        <taxon>Pseudomonadati</taxon>
        <taxon>Pseudomonadota</taxon>
        <taxon>Gammaproteobacteria</taxon>
        <taxon>Pseudomonadales</taxon>
        <taxon>Pseudomonadaceae</taxon>
        <taxon>Pseudomonas</taxon>
    </lineage>
</organism>
<dbReference type="EMBL" id="FM209186">
    <property type="protein sequence ID" value="CAW30084.1"/>
    <property type="molecule type" value="Genomic_DNA"/>
</dbReference>
<dbReference type="RefSeq" id="WP_003095657.1">
    <property type="nucleotide sequence ID" value="NC_011770.1"/>
</dbReference>
<dbReference type="SMR" id="B7V207"/>
<dbReference type="GeneID" id="77223493"/>
<dbReference type="KEGG" id="pag:PLES_53301"/>
<dbReference type="HOGENOM" id="CLU_113688_2_2_6"/>
<dbReference type="GO" id="GO:0005829">
    <property type="term" value="C:cytosol"/>
    <property type="evidence" value="ECO:0007669"/>
    <property type="project" value="TreeGrafter"/>
</dbReference>
<dbReference type="GO" id="GO:0003723">
    <property type="term" value="F:RNA binding"/>
    <property type="evidence" value="ECO:0007669"/>
    <property type="project" value="UniProtKB-UniRule"/>
</dbReference>
<dbReference type="GO" id="GO:0006355">
    <property type="term" value="P:regulation of DNA-templated transcription"/>
    <property type="evidence" value="ECO:0007669"/>
    <property type="project" value="InterPro"/>
</dbReference>
<dbReference type="GO" id="GO:0043487">
    <property type="term" value="P:regulation of RNA stability"/>
    <property type="evidence" value="ECO:0007669"/>
    <property type="project" value="TreeGrafter"/>
</dbReference>
<dbReference type="GO" id="GO:0045974">
    <property type="term" value="P:regulation of translation, ncRNA-mediated"/>
    <property type="evidence" value="ECO:0007669"/>
    <property type="project" value="TreeGrafter"/>
</dbReference>
<dbReference type="CDD" id="cd01716">
    <property type="entry name" value="Hfq"/>
    <property type="match status" value="1"/>
</dbReference>
<dbReference type="FunFam" id="2.30.30.100:FF:000001">
    <property type="entry name" value="RNA-binding protein Hfq"/>
    <property type="match status" value="1"/>
</dbReference>
<dbReference type="Gene3D" id="2.30.30.100">
    <property type="match status" value="1"/>
</dbReference>
<dbReference type="HAMAP" id="MF_00436">
    <property type="entry name" value="Hfq"/>
    <property type="match status" value="1"/>
</dbReference>
<dbReference type="InterPro" id="IPR005001">
    <property type="entry name" value="Hfq"/>
</dbReference>
<dbReference type="InterPro" id="IPR010920">
    <property type="entry name" value="LSM_dom_sf"/>
</dbReference>
<dbReference type="InterPro" id="IPR047575">
    <property type="entry name" value="Sm"/>
</dbReference>
<dbReference type="NCBIfam" id="TIGR02383">
    <property type="entry name" value="Hfq"/>
    <property type="match status" value="1"/>
</dbReference>
<dbReference type="NCBIfam" id="NF001602">
    <property type="entry name" value="PRK00395.1"/>
    <property type="match status" value="1"/>
</dbReference>
<dbReference type="PANTHER" id="PTHR34772">
    <property type="entry name" value="RNA-BINDING PROTEIN HFQ"/>
    <property type="match status" value="1"/>
</dbReference>
<dbReference type="PANTHER" id="PTHR34772:SF1">
    <property type="entry name" value="RNA-BINDING PROTEIN HFQ"/>
    <property type="match status" value="1"/>
</dbReference>
<dbReference type="Pfam" id="PF17209">
    <property type="entry name" value="Hfq"/>
    <property type="match status" value="1"/>
</dbReference>
<dbReference type="SUPFAM" id="SSF50182">
    <property type="entry name" value="Sm-like ribonucleoproteins"/>
    <property type="match status" value="1"/>
</dbReference>
<dbReference type="PROSITE" id="PS52002">
    <property type="entry name" value="SM"/>
    <property type="match status" value="1"/>
</dbReference>
<reference key="1">
    <citation type="journal article" date="2009" name="Genome Res.">
        <title>Newly introduced genomic prophage islands are critical determinants of in vivo competitiveness in the Liverpool epidemic strain of Pseudomonas aeruginosa.</title>
        <authorList>
            <person name="Winstanley C."/>
            <person name="Langille M.G.I."/>
            <person name="Fothergill J.L."/>
            <person name="Kukavica-Ibrulj I."/>
            <person name="Paradis-Bleau C."/>
            <person name="Sanschagrin F."/>
            <person name="Thomson N.R."/>
            <person name="Winsor G.L."/>
            <person name="Quail M.A."/>
            <person name="Lennard N."/>
            <person name="Bignell A."/>
            <person name="Clarke L."/>
            <person name="Seeger K."/>
            <person name="Saunders D."/>
            <person name="Harris D."/>
            <person name="Parkhill J."/>
            <person name="Hancock R.E.W."/>
            <person name="Brinkman F.S.L."/>
            <person name="Levesque R.C."/>
        </authorList>
    </citation>
    <scope>NUCLEOTIDE SEQUENCE [LARGE SCALE GENOMIC DNA]</scope>
    <source>
        <strain>LESB58</strain>
    </source>
</reference>
<sequence>MSKGHSLQDPYLNTLRKERVPVSIYLVNGIKLQGQIESFDQFVILLKNTVSQMVYKHAISTVVPSRPVRLPSGDQPAEPGNA</sequence>
<proteinExistence type="inferred from homology"/>
<comment type="function">
    <text evidence="1">RNA chaperone that binds small regulatory RNA (sRNAs) and mRNAs to facilitate mRNA translational regulation in response to envelope stress, environmental stress and changes in metabolite concentrations. Also binds with high specificity to tRNAs.</text>
</comment>
<comment type="subunit">
    <text evidence="1">Homohexamer.</text>
</comment>
<comment type="similarity">
    <text evidence="1">Belongs to the Hfq family.</text>
</comment>
<keyword id="KW-0694">RNA-binding</keyword>
<keyword id="KW-0346">Stress response</keyword>